<proteinExistence type="inferred from homology"/>
<dbReference type="EMBL" id="FM954972">
    <property type="protein sequence ID" value="CAV20111.1"/>
    <property type="molecule type" value="Genomic_DNA"/>
</dbReference>
<dbReference type="SMR" id="B7VLE5"/>
<dbReference type="STRING" id="575788.VS_2819"/>
<dbReference type="KEGG" id="vsp:VS_2819"/>
<dbReference type="eggNOG" id="COG0094">
    <property type="taxonomic scope" value="Bacteria"/>
</dbReference>
<dbReference type="HOGENOM" id="CLU_061015_2_1_6"/>
<dbReference type="Proteomes" id="UP000009100">
    <property type="component" value="Chromosome 1"/>
</dbReference>
<dbReference type="GO" id="GO:1990904">
    <property type="term" value="C:ribonucleoprotein complex"/>
    <property type="evidence" value="ECO:0007669"/>
    <property type="project" value="UniProtKB-KW"/>
</dbReference>
<dbReference type="GO" id="GO:0005840">
    <property type="term" value="C:ribosome"/>
    <property type="evidence" value="ECO:0007669"/>
    <property type="project" value="UniProtKB-KW"/>
</dbReference>
<dbReference type="GO" id="GO:0019843">
    <property type="term" value="F:rRNA binding"/>
    <property type="evidence" value="ECO:0007669"/>
    <property type="project" value="UniProtKB-UniRule"/>
</dbReference>
<dbReference type="GO" id="GO:0003735">
    <property type="term" value="F:structural constituent of ribosome"/>
    <property type="evidence" value="ECO:0007669"/>
    <property type="project" value="InterPro"/>
</dbReference>
<dbReference type="GO" id="GO:0000049">
    <property type="term" value="F:tRNA binding"/>
    <property type="evidence" value="ECO:0007669"/>
    <property type="project" value="UniProtKB-UniRule"/>
</dbReference>
<dbReference type="GO" id="GO:0006412">
    <property type="term" value="P:translation"/>
    <property type="evidence" value="ECO:0007669"/>
    <property type="project" value="UniProtKB-UniRule"/>
</dbReference>
<dbReference type="FunFam" id="3.30.1440.10:FF:000001">
    <property type="entry name" value="50S ribosomal protein L5"/>
    <property type="match status" value="1"/>
</dbReference>
<dbReference type="Gene3D" id="3.30.1440.10">
    <property type="match status" value="1"/>
</dbReference>
<dbReference type="HAMAP" id="MF_01333_B">
    <property type="entry name" value="Ribosomal_uL5_B"/>
    <property type="match status" value="1"/>
</dbReference>
<dbReference type="InterPro" id="IPR002132">
    <property type="entry name" value="Ribosomal_uL5"/>
</dbReference>
<dbReference type="InterPro" id="IPR020930">
    <property type="entry name" value="Ribosomal_uL5_bac-type"/>
</dbReference>
<dbReference type="InterPro" id="IPR031309">
    <property type="entry name" value="Ribosomal_uL5_C"/>
</dbReference>
<dbReference type="InterPro" id="IPR020929">
    <property type="entry name" value="Ribosomal_uL5_CS"/>
</dbReference>
<dbReference type="InterPro" id="IPR022803">
    <property type="entry name" value="Ribosomal_uL5_dom_sf"/>
</dbReference>
<dbReference type="InterPro" id="IPR031310">
    <property type="entry name" value="Ribosomal_uL5_N"/>
</dbReference>
<dbReference type="NCBIfam" id="NF000585">
    <property type="entry name" value="PRK00010.1"/>
    <property type="match status" value="1"/>
</dbReference>
<dbReference type="PANTHER" id="PTHR11994">
    <property type="entry name" value="60S RIBOSOMAL PROTEIN L11-RELATED"/>
    <property type="match status" value="1"/>
</dbReference>
<dbReference type="Pfam" id="PF00281">
    <property type="entry name" value="Ribosomal_L5"/>
    <property type="match status" value="1"/>
</dbReference>
<dbReference type="Pfam" id="PF00673">
    <property type="entry name" value="Ribosomal_L5_C"/>
    <property type="match status" value="1"/>
</dbReference>
<dbReference type="PIRSF" id="PIRSF002161">
    <property type="entry name" value="Ribosomal_L5"/>
    <property type="match status" value="1"/>
</dbReference>
<dbReference type="SUPFAM" id="SSF55282">
    <property type="entry name" value="RL5-like"/>
    <property type="match status" value="1"/>
</dbReference>
<dbReference type="PROSITE" id="PS00358">
    <property type="entry name" value="RIBOSOMAL_L5"/>
    <property type="match status" value="1"/>
</dbReference>
<protein>
    <recommendedName>
        <fullName evidence="1">Large ribosomal subunit protein uL5</fullName>
    </recommendedName>
    <alternativeName>
        <fullName evidence="2">50S ribosomal protein L5</fullName>
    </alternativeName>
</protein>
<organism>
    <name type="scientific">Vibrio atlanticus (strain LGP32)</name>
    <name type="common">Vibrio splendidus (strain Mel32)</name>
    <dbReference type="NCBI Taxonomy" id="575788"/>
    <lineage>
        <taxon>Bacteria</taxon>
        <taxon>Pseudomonadati</taxon>
        <taxon>Pseudomonadota</taxon>
        <taxon>Gammaproteobacteria</taxon>
        <taxon>Vibrionales</taxon>
        <taxon>Vibrionaceae</taxon>
        <taxon>Vibrio</taxon>
    </lineage>
</organism>
<comment type="function">
    <text evidence="1">This is one of the proteins that bind and probably mediate the attachment of the 5S RNA into the large ribosomal subunit, where it forms part of the central protuberance. In the 70S ribosome it contacts protein S13 of the 30S subunit (bridge B1b), connecting the 2 subunits; this bridge is implicated in subunit movement. Contacts the P site tRNA; the 5S rRNA and some of its associated proteins might help stabilize positioning of ribosome-bound tRNAs.</text>
</comment>
<comment type="subunit">
    <text evidence="1">Part of the 50S ribosomal subunit; part of the 5S rRNA/L5/L18/L25 subcomplex. Contacts the 5S rRNA and the P site tRNA. Forms a bridge to the 30S subunit in the 70S ribosome.</text>
</comment>
<comment type="similarity">
    <text evidence="1">Belongs to the universal ribosomal protein uL5 family.</text>
</comment>
<evidence type="ECO:0000255" key="1">
    <source>
        <dbReference type="HAMAP-Rule" id="MF_01333"/>
    </source>
</evidence>
<evidence type="ECO:0000305" key="2"/>
<name>RL5_VIBA3</name>
<sequence>MAKLHDYYKSSVVAELTKEFSYTSVMQVPRIEKITLNMGVGEAINDKKLLENAASDMATISGQKPLITKARKSVAGFKIREGYPIGCKVTLRGERMWEFLERLISIALPRVRDFRGVSAKSFDGRGNYSMGVREQIIFPEIDYDKVDRVRGLDITITTSAGSDEEGRALLAAFNFPFRK</sequence>
<keyword id="KW-0687">Ribonucleoprotein</keyword>
<keyword id="KW-0689">Ribosomal protein</keyword>
<keyword id="KW-0694">RNA-binding</keyword>
<keyword id="KW-0699">rRNA-binding</keyword>
<keyword id="KW-0820">tRNA-binding</keyword>
<feature type="chain" id="PRO_1000166158" description="Large ribosomal subunit protein uL5">
    <location>
        <begin position="1"/>
        <end position="179"/>
    </location>
</feature>
<accession>B7VLE5</accession>
<reference key="1">
    <citation type="submission" date="2009-02" db="EMBL/GenBank/DDBJ databases">
        <title>Vibrio splendidus str. LGP32 complete genome.</title>
        <authorList>
            <person name="Mazel D."/>
            <person name="Le Roux F."/>
        </authorList>
    </citation>
    <scope>NUCLEOTIDE SEQUENCE [LARGE SCALE GENOMIC DNA]</scope>
    <source>
        <strain>LGP32</strain>
    </source>
</reference>
<gene>
    <name evidence="1" type="primary">rplE</name>
    <name type="ordered locus">VS_2819</name>
</gene>